<feature type="chain" id="PRO_0000387117" description="Ribosomal RNA small subunit methyltransferase H">
    <location>
        <begin position="1"/>
        <end position="313"/>
    </location>
</feature>
<feature type="binding site" evidence="1">
    <location>
        <begin position="35"/>
        <end position="37"/>
    </location>
    <ligand>
        <name>S-adenosyl-L-methionine</name>
        <dbReference type="ChEBI" id="CHEBI:59789"/>
    </ligand>
</feature>
<feature type="binding site" evidence="1">
    <location>
        <position position="55"/>
    </location>
    <ligand>
        <name>S-adenosyl-L-methionine</name>
        <dbReference type="ChEBI" id="CHEBI:59789"/>
    </ligand>
</feature>
<feature type="binding site" evidence="1">
    <location>
        <position position="80"/>
    </location>
    <ligand>
        <name>S-adenosyl-L-methionine</name>
        <dbReference type="ChEBI" id="CHEBI:59789"/>
    </ligand>
</feature>
<feature type="binding site" evidence="1">
    <location>
        <position position="102"/>
    </location>
    <ligand>
        <name>S-adenosyl-L-methionine</name>
        <dbReference type="ChEBI" id="CHEBI:59789"/>
    </ligand>
</feature>
<feature type="binding site" evidence="1">
    <location>
        <position position="109"/>
    </location>
    <ligand>
        <name>S-adenosyl-L-methionine</name>
        <dbReference type="ChEBI" id="CHEBI:59789"/>
    </ligand>
</feature>
<name>RSMH_SHELP</name>
<comment type="function">
    <text evidence="1">Specifically methylates the N4 position of cytidine in position 1402 (C1402) of 16S rRNA.</text>
</comment>
<comment type="catalytic activity">
    <reaction evidence="1">
        <text>cytidine(1402) in 16S rRNA + S-adenosyl-L-methionine = N(4)-methylcytidine(1402) in 16S rRNA + S-adenosyl-L-homocysteine + H(+)</text>
        <dbReference type="Rhea" id="RHEA:42928"/>
        <dbReference type="Rhea" id="RHEA-COMP:10286"/>
        <dbReference type="Rhea" id="RHEA-COMP:10287"/>
        <dbReference type="ChEBI" id="CHEBI:15378"/>
        <dbReference type="ChEBI" id="CHEBI:57856"/>
        <dbReference type="ChEBI" id="CHEBI:59789"/>
        <dbReference type="ChEBI" id="CHEBI:74506"/>
        <dbReference type="ChEBI" id="CHEBI:82748"/>
        <dbReference type="EC" id="2.1.1.199"/>
    </reaction>
</comment>
<comment type="subcellular location">
    <subcellularLocation>
        <location evidence="1">Cytoplasm</location>
    </subcellularLocation>
</comment>
<comment type="similarity">
    <text evidence="1">Belongs to the methyltransferase superfamily. RsmH family.</text>
</comment>
<proteinExistence type="inferred from homology"/>
<accession>A3QIM9</accession>
<gene>
    <name evidence="1" type="primary">rsmH</name>
    <name type="synonym">mraW</name>
    <name type="ordered locus">Shew_3461</name>
</gene>
<protein>
    <recommendedName>
        <fullName evidence="1">Ribosomal RNA small subunit methyltransferase H</fullName>
        <ecNumber evidence="1">2.1.1.199</ecNumber>
    </recommendedName>
    <alternativeName>
        <fullName evidence="1">16S rRNA m(4)C1402 methyltransferase</fullName>
    </alternativeName>
    <alternativeName>
        <fullName evidence="1">rRNA (cytosine-N(4)-)-methyltransferase RsmH</fullName>
    </alternativeName>
</protein>
<reference key="1">
    <citation type="submission" date="2007-03" db="EMBL/GenBank/DDBJ databases">
        <title>Complete sequence of Shewanella loihica PV-4.</title>
        <authorList>
            <consortium name="US DOE Joint Genome Institute"/>
            <person name="Copeland A."/>
            <person name="Lucas S."/>
            <person name="Lapidus A."/>
            <person name="Barry K."/>
            <person name="Detter J.C."/>
            <person name="Glavina del Rio T."/>
            <person name="Hammon N."/>
            <person name="Israni S."/>
            <person name="Dalin E."/>
            <person name="Tice H."/>
            <person name="Pitluck S."/>
            <person name="Chain P."/>
            <person name="Malfatti S."/>
            <person name="Shin M."/>
            <person name="Vergez L."/>
            <person name="Schmutz J."/>
            <person name="Larimer F."/>
            <person name="Land M."/>
            <person name="Hauser L."/>
            <person name="Kyrpides N."/>
            <person name="Mikhailova N."/>
            <person name="Romine M.F."/>
            <person name="Serres G."/>
            <person name="Fredrickson J."/>
            <person name="Tiedje J."/>
            <person name="Richardson P."/>
        </authorList>
    </citation>
    <scope>NUCLEOTIDE SEQUENCE [LARGE SCALE GENOMIC DNA]</scope>
    <source>
        <strain>ATCC BAA-1088 / PV-4</strain>
    </source>
</reference>
<sequence>MTQEFAHLSVLLTETVAGLNIKPEGIYIDGTFGRGGHSREVLKQLGPNGRLIAIDRDPQAIAAAEQFADDARFSIVHGGFGQLAQYVDDLGLRGKIDGILFDFGVSSPQLDDAERGFSFLRDGPLDMRMDNSQGETAAEWLARAEIEDMAWVFKTYGEEKNARHIARCIAADRDKTPFLRTKELADLIARVSKSKERNKHPATRVFQAIRIYINSELEQIDQALEGAVTVLAPQGRLSVISFHSLEDRMVKRFIRRHSQGESVPHGLPLTEAEINKTRLLKAVGKAIKPSAEEIDRNARARSSVLRVAERLDY</sequence>
<organism>
    <name type="scientific">Shewanella loihica (strain ATCC BAA-1088 / PV-4)</name>
    <dbReference type="NCBI Taxonomy" id="323850"/>
    <lineage>
        <taxon>Bacteria</taxon>
        <taxon>Pseudomonadati</taxon>
        <taxon>Pseudomonadota</taxon>
        <taxon>Gammaproteobacteria</taxon>
        <taxon>Alteromonadales</taxon>
        <taxon>Shewanellaceae</taxon>
        <taxon>Shewanella</taxon>
    </lineage>
</organism>
<keyword id="KW-0963">Cytoplasm</keyword>
<keyword id="KW-0489">Methyltransferase</keyword>
<keyword id="KW-1185">Reference proteome</keyword>
<keyword id="KW-0698">rRNA processing</keyword>
<keyword id="KW-0949">S-adenosyl-L-methionine</keyword>
<keyword id="KW-0808">Transferase</keyword>
<evidence type="ECO:0000255" key="1">
    <source>
        <dbReference type="HAMAP-Rule" id="MF_01007"/>
    </source>
</evidence>
<dbReference type="EC" id="2.1.1.199" evidence="1"/>
<dbReference type="EMBL" id="CP000606">
    <property type="protein sequence ID" value="ABO25327.1"/>
    <property type="molecule type" value="Genomic_DNA"/>
</dbReference>
<dbReference type="RefSeq" id="WP_011867257.1">
    <property type="nucleotide sequence ID" value="NC_009092.1"/>
</dbReference>
<dbReference type="SMR" id="A3QIM9"/>
<dbReference type="STRING" id="323850.Shew_3461"/>
<dbReference type="KEGG" id="slo:Shew_3461"/>
<dbReference type="eggNOG" id="COG0275">
    <property type="taxonomic scope" value="Bacteria"/>
</dbReference>
<dbReference type="HOGENOM" id="CLU_038422_2_0_6"/>
<dbReference type="OrthoDB" id="9806637at2"/>
<dbReference type="Proteomes" id="UP000001558">
    <property type="component" value="Chromosome"/>
</dbReference>
<dbReference type="GO" id="GO:0005737">
    <property type="term" value="C:cytoplasm"/>
    <property type="evidence" value="ECO:0007669"/>
    <property type="project" value="UniProtKB-SubCell"/>
</dbReference>
<dbReference type="GO" id="GO:0071424">
    <property type="term" value="F:rRNA (cytosine-N4-)-methyltransferase activity"/>
    <property type="evidence" value="ECO:0007669"/>
    <property type="project" value="UniProtKB-UniRule"/>
</dbReference>
<dbReference type="GO" id="GO:0070475">
    <property type="term" value="P:rRNA base methylation"/>
    <property type="evidence" value="ECO:0007669"/>
    <property type="project" value="UniProtKB-UniRule"/>
</dbReference>
<dbReference type="FunFam" id="1.10.150.170:FF:000001">
    <property type="entry name" value="Ribosomal RNA small subunit methyltransferase H"/>
    <property type="match status" value="1"/>
</dbReference>
<dbReference type="Gene3D" id="1.10.150.170">
    <property type="entry name" value="Putative methyltransferase TM0872, insert domain"/>
    <property type="match status" value="1"/>
</dbReference>
<dbReference type="Gene3D" id="3.40.50.150">
    <property type="entry name" value="Vaccinia Virus protein VP39"/>
    <property type="match status" value="1"/>
</dbReference>
<dbReference type="HAMAP" id="MF_01007">
    <property type="entry name" value="16SrRNA_methyltr_H"/>
    <property type="match status" value="1"/>
</dbReference>
<dbReference type="InterPro" id="IPR002903">
    <property type="entry name" value="RsmH"/>
</dbReference>
<dbReference type="InterPro" id="IPR023397">
    <property type="entry name" value="SAM-dep_MeTrfase_MraW_recog"/>
</dbReference>
<dbReference type="InterPro" id="IPR029063">
    <property type="entry name" value="SAM-dependent_MTases_sf"/>
</dbReference>
<dbReference type="NCBIfam" id="TIGR00006">
    <property type="entry name" value="16S rRNA (cytosine(1402)-N(4))-methyltransferase RsmH"/>
    <property type="match status" value="1"/>
</dbReference>
<dbReference type="PANTHER" id="PTHR11265:SF0">
    <property type="entry name" value="12S RRNA N4-METHYLCYTIDINE METHYLTRANSFERASE"/>
    <property type="match status" value="1"/>
</dbReference>
<dbReference type="PANTHER" id="PTHR11265">
    <property type="entry name" value="S-ADENOSYL-METHYLTRANSFERASE MRAW"/>
    <property type="match status" value="1"/>
</dbReference>
<dbReference type="Pfam" id="PF01795">
    <property type="entry name" value="Methyltransf_5"/>
    <property type="match status" value="1"/>
</dbReference>
<dbReference type="PIRSF" id="PIRSF004486">
    <property type="entry name" value="MraW"/>
    <property type="match status" value="1"/>
</dbReference>
<dbReference type="SUPFAM" id="SSF81799">
    <property type="entry name" value="Putative methyltransferase TM0872, insert domain"/>
    <property type="match status" value="1"/>
</dbReference>
<dbReference type="SUPFAM" id="SSF53335">
    <property type="entry name" value="S-adenosyl-L-methionine-dependent methyltransferases"/>
    <property type="match status" value="1"/>
</dbReference>